<protein>
    <recommendedName>
        <fullName>Gene 42 protein</fullName>
    </recommendedName>
    <alternativeName>
        <fullName>Gp42</fullName>
    </alternativeName>
</protein>
<name>VG42_BPMD2</name>
<dbReference type="EMBL" id="AF022214">
    <property type="protein sequence ID" value="AAC18483.1"/>
    <property type="molecule type" value="Genomic_DNA"/>
</dbReference>
<dbReference type="PIR" id="H72804">
    <property type="entry name" value="H72804"/>
</dbReference>
<dbReference type="RefSeq" id="NP_046858.1">
    <property type="nucleotide sequence ID" value="NC_001900.1"/>
</dbReference>
<dbReference type="GeneID" id="1261574"/>
<dbReference type="KEGG" id="vg:1261574"/>
<dbReference type="OrthoDB" id="24255at10239"/>
<dbReference type="Proteomes" id="UP000002131">
    <property type="component" value="Segment"/>
</dbReference>
<proteinExistence type="predicted"/>
<keyword id="KW-1185">Reference proteome</keyword>
<reference key="1">
    <citation type="journal article" date="1998" name="J. Mol. Biol.">
        <title>Genome structure of mycobacteriophage D29: implications for phage evolution.</title>
        <authorList>
            <person name="Ford M.E."/>
            <person name="Sarkis G.J."/>
            <person name="Belanger A.E."/>
            <person name="Hendrix R.W."/>
            <person name="Hatfull G.F."/>
        </authorList>
    </citation>
    <scope>NUCLEOTIDE SEQUENCE [LARGE SCALE GENOMIC DNA]</scope>
</reference>
<feature type="chain" id="PRO_0000164767" description="Gene 42 protein">
    <location>
        <begin position="1"/>
        <end position="68"/>
    </location>
</feature>
<accession>O64233</accession>
<sequence>MAQANVVLPAPNGKLTEELMGLAIHKLSQLGTIEGDEIGVYTADVPEGRPPGFYFEFRANIIPYLGRR</sequence>
<gene>
    <name type="primary">42</name>
</gene>
<organism>
    <name type="scientific">Mycobacterium phage D29</name>
    <name type="common">Mycobacteriophage D29</name>
    <dbReference type="NCBI Taxonomy" id="28369"/>
    <lineage>
        <taxon>Viruses</taxon>
        <taxon>Duplodnaviria</taxon>
        <taxon>Heunggongvirae</taxon>
        <taxon>Uroviricota</taxon>
        <taxon>Caudoviricetes</taxon>
        <taxon>Fromanvirus</taxon>
    </lineage>
</organism>
<organismHost>
    <name type="scientific">Mycobacterium</name>
    <dbReference type="NCBI Taxonomy" id="1763"/>
</organismHost>